<proteinExistence type="evidence at protein level"/>
<accession>Q9UT43</accession>
<accession>Q9P6S8</accession>
<gene>
    <name evidence="11" type="primary">dnf1</name>
    <name type="ORF">SPAC821.13c</name>
    <name evidence="11" type="ORF">SPAC955.01c</name>
</gene>
<reference key="1">
    <citation type="journal article" date="2002" name="Nature">
        <title>The genome sequence of Schizosaccharomyces pombe.</title>
        <authorList>
            <person name="Wood V."/>
            <person name="Gwilliam R."/>
            <person name="Rajandream M.A."/>
            <person name="Lyne M.H."/>
            <person name="Lyne R."/>
            <person name="Stewart A."/>
            <person name="Sgouros J.G."/>
            <person name="Peat N."/>
            <person name="Hayles J."/>
            <person name="Baker S.G."/>
            <person name="Basham D."/>
            <person name="Bowman S."/>
            <person name="Brooks K."/>
            <person name="Brown D."/>
            <person name="Brown S."/>
            <person name="Chillingworth T."/>
            <person name="Churcher C.M."/>
            <person name="Collins M."/>
            <person name="Connor R."/>
            <person name="Cronin A."/>
            <person name="Davis P."/>
            <person name="Feltwell T."/>
            <person name="Fraser A."/>
            <person name="Gentles S."/>
            <person name="Goble A."/>
            <person name="Hamlin N."/>
            <person name="Harris D.E."/>
            <person name="Hidalgo J."/>
            <person name="Hodgson G."/>
            <person name="Holroyd S."/>
            <person name="Hornsby T."/>
            <person name="Howarth S."/>
            <person name="Huckle E.J."/>
            <person name="Hunt S."/>
            <person name="Jagels K."/>
            <person name="James K.D."/>
            <person name="Jones L."/>
            <person name="Jones M."/>
            <person name="Leather S."/>
            <person name="McDonald S."/>
            <person name="McLean J."/>
            <person name="Mooney P."/>
            <person name="Moule S."/>
            <person name="Mungall K.L."/>
            <person name="Murphy L.D."/>
            <person name="Niblett D."/>
            <person name="Odell C."/>
            <person name="Oliver K."/>
            <person name="O'Neil S."/>
            <person name="Pearson D."/>
            <person name="Quail M.A."/>
            <person name="Rabbinowitsch E."/>
            <person name="Rutherford K.M."/>
            <person name="Rutter S."/>
            <person name="Saunders D."/>
            <person name="Seeger K."/>
            <person name="Sharp S."/>
            <person name="Skelton J."/>
            <person name="Simmonds M.N."/>
            <person name="Squares R."/>
            <person name="Squares S."/>
            <person name="Stevens K."/>
            <person name="Taylor K."/>
            <person name="Taylor R.G."/>
            <person name="Tivey A."/>
            <person name="Walsh S.V."/>
            <person name="Warren T."/>
            <person name="Whitehead S."/>
            <person name="Woodward J.R."/>
            <person name="Volckaert G."/>
            <person name="Aert R."/>
            <person name="Robben J."/>
            <person name="Grymonprez B."/>
            <person name="Weltjens I."/>
            <person name="Vanstreels E."/>
            <person name="Rieger M."/>
            <person name="Schaefer M."/>
            <person name="Mueller-Auer S."/>
            <person name="Gabel C."/>
            <person name="Fuchs M."/>
            <person name="Duesterhoeft A."/>
            <person name="Fritzc C."/>
            <person name="Holzer E."/>
            <person name="Moestl D."/>
            <person name="Hilbert H."/>
            <person name="Borzym K."/>
            <person name="Langer I."/>
            <person name="Beck A."/>
            <person name="Lehrach H."/>
            <person name="Reinhardt R."/>
            <person name="Pohl T.M."/>
            <person name="Eger P."/>
            <person name="Zimmermann W."/>
            <person name="Wedler H."/>
            <person name="Wambutt R."/>
            <person name="Purnelle B."/>
            <person name="Goffeau A."/>
            <person name="Cadieu E."/>
            <person name="Dreano S."/>
            <person name="Gloux S."/>
            <person name="Lelaure V."/>
            <person name="Mottier S."/>
            <person name="Galibert F."/>
            <person name="Aves S.J."/>
            <person name="Xiang Z."/>
            <person name="Hunt C."/>
            <person name="Moore K."/>
            <person name="Hurst S.M."/>
            <person name="Lucas M."/>
            <person name="Rochet M."/>
            <person name="Gaillardin C."/>
            <person name="Tallada V.A."/>
            <person name="Garzon A."/>
            <person name="Thode G."/>
            <person name="Daga R.R."/>
            <person name="Cruzado L."/>
            <person name="Jimenez J."/>
            <person name="Sanchez M."/>
            <person name="del Rey F."/>
            <person name="Benito J."/>
            <person name="Dominguez A."/>
            <person name="Revuelta J.L."/>
            <person name="Moreno S."/>
            <person name="Armstrong J."/>
            <person name="Forsburg S.L."/>
            <person name="Cerutti L."/>
            <person name="Lowe T."/>
            <person name="McCombie W.R."/>
            <person name="Paulsen I."/>
            <person name="Potashkin J."/>
            <person name="Shpakovski G.V."/>
            <person name="Ussery D."/>
            <person name="Barrell B.G."/>
            <person name="Nurse P."/>
        </authorList>
    </citation>
    <scope>NUCLEOTIDE SEQUENCE [LARGE SCALE GENOMIC DNA]</scope>
    <source>
        <strain>972 / ATCC 24843</strain>
    </source>
</reference>
<reference key="2">
    <citation type="journal article" date="2008" name="J. Proteome Res.">
        <title>Phosphoproteome analysis of fission yeast.</title>
        <authorList>
            <person name="Wilson-Grady J.T."/>
            <person name="Villen J."/>
            <person name="Gygi S.P."/>
        </authorList>
    </citation>
    <scope>PHOSPHORYLATION [LARGE SCALE ANALYSIS] AT SER-954</scope>
    <scope>IDENTIFICATION BY MASS SPECTROMETRY</scope>
</reference>
<sequence>MKSSGIAGDSNGFETNFLNETTNREEDGAFNWNAADDGTNERREDIHVRFQDSALPLGIDENELDEIDINGDSKKLDSVEVDESHDVNSPSDSRLKSSFKSVLELTANSMVSVLTPSTKTEQTSKGKGKKKKAHVSFLEGPVEEIPLDDIEPTSPREASPVFNGRPPIPPEFLKSRHKEFTIPNPLQFISNFLSNLFSRDTRYLKSSHGRIIIINPYDDSSQIDERTGKPYMQNSIVSSRYNKYNFVPLQIIAQFSKTANCYFLLIAIMQMIPGWSTTGTYTTIIPLLIFISIAILREGFDNYRRYRQDRVENRIQTQVLRHVDVDPPIVEEHSSFFRRRRWRRSRSQESASRSTIRSTDEREPERTSEDPPQLPPSPSSPSSPALSVKPNIDPQPPLYNSTLTTTRSIPANKPTFFWASCDRKDVRVGDIIRLTSDQTLPADVIALSSPNPNGAIYIETAALDGETSLKTRLVNSTLRSLCKDINDLIRLSGTCTVEDPNGDLYNFNGSMKLDSIQGEIPLSNNDVLYRGSNLRNTSELFALVIFTGEESKIRMNAVRNVSVKAPSMQKVTNRIVIFIFALVVSMAIYCTAAYFVWQKKVERKLWYLTNSKLSFVPILVSFIILYNTMVPISLYVSMEIIRVFQTFLVQSDIDLYYPENDTRCEVRSSSILEELGQVTHVFSDKTGTLTDNIMLFRNLSVGGFAWQHVGAENPKLVSTSQKSDDLDGEAKPPQLENIQGTTIQLLQYVHDNPHTTFSKRVRIFLLNLAICHTCLPSFDEENQIYKYQSISPDELALVHAAQQLGYIVIDRDIDSLTIRLHYPLDPHSHPIAKTYRILNIIEFTSKRKCMSVIVRMPNGRICLFCKGADSAIIKRLRLSNLAKRKDKSVTKAEQARKSIEIDKAIIRNSQSTSRPSLTASRPSLSRRRNDYINNVTSWLDERREKMGVVRPRASTSILETRRRPAVGRHSLAGGERLMEDKKYLSKQEEAEGSIYESLNHNDAKLFENTFEHVHAFATDGLRTLMYAHRFIDESEYQSWKLVNDAALNSLSNRQQLLDEAADLIEKDLEFAGATAIEDKLQVGVPESINSLFRAGIKFWMLTGDKKETAINIGHSCGVIKEYSTVVVMGSLDGVEGSDETVSGGQRLSLDRPPTNDPASLMIHQLISCMNAIHSNSLAHLVIVIDGSTLADIENDPELFLLFINTAVEADSVICCRSSPMQKALMVQKVRNTLEKAVTLAIGDGANDIAMIQEAHVGIGIAGREGLQAARSSDFSIGRFKFLIKLLFCHGRWSYVRLSKYILGTFYKEQFFFLMQAIMQPFVGYTGQSLYESWGLTCFNTLFSSLCVIGLGIFEKDLSASTVIAVPELYQKGINNEAFNWRVYFGWCSIAFIQAFLVFYVTYSLFGMKELNDNNIFAYGQLIFTAAIFIMNFKLVFIEMQYINIISIIVLVLTSLAWFLFNIFISEHYPDKNLYLARSQFLHHFGKNPSWWLTMLFVMVCALTIDIVAQMLRRTLRPTDTDIFVEMENDAFVRSRFEQESGEFLQANAPSVDEIEQYLKSRD</sequence>
<protein>
    <recommendedName>
        <fullName evidence="10">Phospholipid-transporting ATPase dnf1</fullName>
        <ecNumber evidence="5">7.6.2.1</ecNumber>
    </recommendedName>
</protein>
<feature type="chain" id="PRO_0000046240" description="Phospholipid-transporting ATPase dnf1">
    <location>
        <begin position="1"/>
        <end position="1562"/>
    </location>
</feature>
<feature type="topological domain" description="Extracellular" evidence="7">
    <location>
        <begin position="1"/>
        <end position="275"/>
    </location>
</feature>
<feature type="transmembrane region" description="Helical" evidence="7">
    <location>
        <begin position="276"/>
        <end position="296"/>
    </location>
</feature>
<feature type="topological domain" description="Cytoplasmic" evidence="7">
    <location>
        <begin position="297"/>
        <end position="574"/>
    </location>
</feature>
<feature type="transmembrane region" description="Helical" evidence="7">
    <location>
        <begin position="575"/>
        <end position="595"/>
    </location>
</feature>
<feature type="topological domain" description="Extracellular" evidence="7">
    <location>
        <begin position="596"/>
        <end position="614"/>
    </location>
</feature>
<feature type="transmembrane region" description="Helical" evidence="7">
    <location>
        <begin position="615"/>
        <end position="635"/>
    </location>
</feature>
<feature type="topological domain" description="Cytoplasmic" evidence="7">
    <location>
        <begin position="636"/>
        <end position="1309"/>
    </location>
</feature>
<feature type="transmembrane region" description="Helical" evidence="7">
    <location>
        <begin position="1310"/>
        <end position="1330"/>
    </location>
</feature>
<feature type="topological domain" description="Extracellular" evidence="7">
    <location>
        <begin position="1331"/>
        <end position="1332"/>
    </location>
</feature>
<feature type="transmembrane region" description="Helical" evidence="7">
    <location>
        <begin position="1333"/>
        <end position="1353"/>
    </location>
</feature>
<feature type="topological domain" description="Cytoplasmic" evidence="7">
    <location>
        <begin position="1354"/>
        <end position="1381"/>
    </location>
</feature>
<feature type="transmembrane region" description="Helical" evidence="7">
    <location>
        <begin position="1382"/>
        <end position="1402"/>
    </location>
</feature>
<feature type="topological domain" description="Extracellular" evidence="7">
    <location>
        <begin position="1403"/>
        <end position="1414"/>
    </location>
</feature>
<feature type="transmembrane region" description="Helical" evidence="7">
    <location>
        <begin position="1415"/>
        <end position="1435"/>
    </location>
</feature>
<feature type="topological domain" description="Cytoplasmic" evidence="7">
    <location>
        <begin position="1436"/>
        <end position="1443"/>
    </location>
</feature>
<feature type="transmembrane region" description="Helical" evidence="7">
    <location>
        <begin position="1444"/>
        <end position="1464"/>
    </location>
</feature>
<feature type="topological domain" description="Extracellular" evidence="7">
    <location>
        <begin position="1465"/>
        <end position="1490"/>
    </location>
</feature>
<feature type="transmembrane region" description="Helical" evidence="7">
    <location>
        <begin position="1491"/>
        <end position="1511"/>
    </location>
</feature>
<feature type="topological domain" description="Cytoplasmic" evidence="7">
    <location>
        <begin position="1512"/>
        <end position="1562"/>
    </location>
</feature>
<feature type="region of interest" description="Disordered" evidence="8">
    <location>
        <begin position="1"/>
        <end position="38"/>
    </location>
</feature>
<feature type="region of interest" description="Disordered" evidence="8">
    <location>
        <begin position="55"/>
        <end position="94"/>
    </location>
</feature>
<feature type="region of interest" description="Disordered" evidence="8">
    <location>
        <begin position="115"/>
        <end position="134"/>
    </location>
</feature>
<feature type="region of interest" description="Disordered" evidence="8">
    <location>
        <begin position="146"/>
        <end position="166"/>
    </location>
</feature>
<feature type="region of interest" description="Disordered" evidence="8">
    <location>
        <begin position="347"/>
        <end position="406"/>
    </location>
</feature>
<feature type="compositionally biased region" description="Polar residues" evidence="8">
    <location>
        <begin position="12"/>
        <end position="21"/>
    </location>
</feature>
<feature type="compositionally biased region" description="Acidic residues" evidence="8">
    <location>
        <begin position="60"/>
        <end position="69"/>
    </location>
</feature>
<feature type="compositionally biased region" description="Basic and acidic residues" evidence="8">
    <location>
        <begin position="71"/>
        <end position="86"/>
    </location>
</feature>
<feature type="compositionally biased region" description="Basic and acidic residues" evidence="8">
    <location>
        <begin position="358"/>
        <end position="369"/>
    </location>
</feature>
<feature type="compositionally biased region" description="Pro residues" evidence="8">
    <location>
        <begin position="372"/>
        <end position="381"/>
    </location>
</feature>
<feature type="active site" description="4-aspartylphosphate intermediate" evidence="6">
    <location>
        <position position="684"/>
    </location>
</feature>
<feature type="binding site" evidence="6">
    <location>
        <position position="684"/>
    </location>
    <ligand>
        <name>ATP</name>
        <dbReference type="ChEBI" id="CHEBI:30616"/>
    </ligand>
</feature>
<feature type="binding site" evidence="6">
    <location>
        <position position="684"/>
    </location>
    <ligand>
        <name>Mg(2+)</name>
        <dbReference type="ChEBI" id="CHEBI:18420"/>
    </ligand>
</feature>
<feature type="binding site" evidence="6">
    <location>
        <position position="685"/>
    </location>
    <ligand>
        <name>ATP</name>
        <dbReference type="ChEBI" id="CHEBI:30616"/>
    </ligand>
</feature>
<feature type="binding site" evidence="4">
    <location>
        <position position="686"/>
    </location>
    <ligand>
        <name>ATP</name>
        <dbReference type="ChEBI" id="CHEBI:30616"/>
    </ligand>
</feature>
<feature type="binding site" evidence="6">
    <location>
        <position position="686"/>
    </location>
    <ligand>
        <name>Mg(2+)</name>
        <dbReference type="ChEBI" id="CHEBI:18420"/>
    </ligand>
</feature>
<feature type="binding site" evidence="2">
    <location>
        <position position="794"/>
    </location>
    <ligand>
        <name>ATP</name>
        <dbReference type="ChEBI" id="CHEBI:30616"/>
    </ligand>
</feature>
<feature type="binding site" evidence="6">
    <location>
        <position position="843"/>
    </location>
    <ligand>
        <name>ATP</name>
        <dbReference type="ChEBI" id="CHEBI:30616"/>
    </ligand>
</feature>
<feature type="binding site" evidence="3">
    <location>
        <position position="845"/>
    </location>
    <ligand>
        <name>ATP</name>
        <dbReference type="ChEBI" id="CHEBI:30616"/>
    </ligand>
</feature>
<feature type="binding site" evidence="4">
    <location>
        <position position="848"/>
    </location>
    <ligand>
        <name>ATP</name>
        <dbReference type="ChEBI" id="CHEBI:30616"/>
    </ligand>
</feature>
<feature type="binding site" evidence="2">
    <location>
        <position position="866"/>
    </location>
    <ligand>
        <name>ATP</name>
        <dbReference type="ChEBI" id="CHEBI:30616"/>
    </ligand>
</feature>
<feature type="binding site" evidence="2">
    <location>
        <position position="1022"/>
    </location>
    <ligand>
        <name>ATP</name>
        <dbReference type="ChEBI" id="CHEBI:30616"/>
    </ligand>
</feature>
<feature type="binding site" evidence="4">
    <location>
        <position position="1023"/>
    </location>
    <ligand>
        <name>ATP</name>
        <dbReference type="ChEBI" id="CHEBI:30616"/>
    </ligand>
</feature>
<feature type="binding site" evidence="2">
    <location>
        <position position="1102"/>
    </location>
    <ligand>
        <name>ATP</name>
        <dbReference type="ChEBI" id="CHEBI:30616"/>
    </ligand>
</feature>
<feature type="binding site" evidence="2">
    <location>
        <position position="1103"/>
    </location>
    <ligand>
        <name>ATP</name>
        <dbReference type="ChEBI" id="CHEBI:30616"/>
    </ligand>
</feature>
<feature type="binding site" evidence="2">
    <location>
        <position position="1104"/>
    </location>
    <ligand>
        <name>ATP</name>
        <dbReference type="ChEBI" id="CHEBI:30616"/>
    </ligand>
</feature>
<feature type="binding site" evidence="7">
    <location>
        <begin position="1181"/>
        <end position="1188"/>
    </location>
    <ligand>
        <name>ATP</name>
        <dbReference type="ChEBI" id="CHEBI:30616"/>
    </ligand>
</feature>
<feature type="binding site" evidence="2">
    <location>
        <position position="1216"/>
    </location>
    <ligand>
        <name>ATP</name>
        <dbReference type="ChEBI" id="CHEBI:30616"/>
    </ligand>
</feature>
<feature type="binding site" evidence="2">
    <location>
        <position position="1222"/>
    </location>
    <ligand>
        <name>ATP</name>
        <dbReference type="ChEBI" id="CHEBI:30616"/>
    </ligand>
</feature>
<feature type="binding site" evidence="6">
    <location>
        <position position="1243"/>
    </location>
    <ligand>
        <name>Mg(2+)</name>
        <dbReference type="ChEBI" id="CHEBI:18420"/>
    </ligand>
</feature>
<feature type="binding site" evidence="6">
    <location>
        <position position="1246"/>
    </location>
    <ligand>
        <name>ATP</name>
        <dbReference type="ChEBI" id="CHEBI:30616"/>
    </ligand>
</feature>
<feature type="binding site" evidence="2">
    <location>
        <position position="1247"/>
    </location>
    <ligand>
        <name>ATP</name>
        <dbReference type="ChEBI" id="CHEBI:30616"/>
    </ligand>
</feature>
<feature type="site" description="Involved in the release of the transported lipid into the cytosolic leaflet" evidence="1">
    <location>
        <position position="632"/>
    </location>
</feature>
<feature type="modified residue" description="Phosphoserine" evidence="9">
    <location>
        <position position="954"/>
    </location>
</feature>
<comment type="function">
    <text evidence="5">Catalytic component of a P4-ATPase flippase complex which catalyzes the hydrolysis of ATP coupled to the transport of phosphatidylcholine and small amounts of phosphatidylethanolamine from the lumen to the cytosolic leaflet of the trans-Golgi network and ensures the maintenance of asymmetric distribution of phospholipids. May be involved in transport from early endosomes to the trans-Golgi network (TGN).</text>
</comment>
<comment type="catalytic activity">
    <reaction evidence="5">
        <text>ATP + H2O + phospholipidSide 1 = ADP + phosphate + phospholipidSide 2.</text>
        <dbReference type="EC" id="7.6.2.1"/>
    </reaction>
</comment>
<comment type="catalytic activity">
    <reaction evidence="5">
        <text>a 1,2-diacyl-sn-glycero-3-phosphocholine(out) + ATP + H2O = a 1,2-diacyl-sn-glycero-3-phosphocholine(in) + ADP + phosphate + H(+)</text>
        <dbReference type="Rhea" id="RHEA:38583"/>
        <dbReference type="ChEBI" id="CHEBI:15377"/>
        <dbReference type="ChEBI" id="CHEBI:15378"/>
        <dbReference type="ChEBI" id="CHEBI:30616"/>
        <dbReference type="ChEBI" id="CHEBI:43474"/>
        <dbReference type="ChEBI" id="CHEBI:57643"/>
        <dbReference type="ChEBI" id="CHEBI:456216"/>
    </reaction>
    <physiologicalReaction direction="left-to-right" evidence="5">
        <dbReference type="Rhea" id="RHEA:38584"/>
    </physiologicalReaction>
</comment>
<comment type="catalytic activity">
    <reaction evidence="5">
        <text>a 1,2-diacyl-sn-glycero-3-phosphoethanolamine(out) + ATP + H2O = a 1,2-diacyl-sn-glycero-3-phosphoethanolamine(in) + ADP + phosphate + H(+)</text>
        <dbReference type="Rhea" id="RHEA:66132"/>
        <dbReference type="ChEBI" id="CHEBI:15377"/>
        <dbReference type="ChEBI" id="CHEBI:15378"/>
        <dbReference type="ChEBI" id="CHEBI:30616"/>
        <dbReference type="ChEBI" id="CHEBI:43474"/>
        <dbReference type="ChEBI" id="CHEBI:64612"/>
        <dbReference type="ChEBI" id="CHEBI:456216"/>
    </reaction>
    <physiologicalReaction direction="left-to-right" evidence="5">
        <dbReference type="Rhea" id="RHEA:66133"/>
    </physiologicalReaction>
</comment>
<comment type="cofactor">
    <cofactor evidence="4">
        <name>Mg(2+)</name>
        <dbReference type="ChEBI" id="CHEBI:18420"/>
    </cofactor>
</comment>
<comment type="subcellular location">
    <subcellularLocation>
        <location evidence="5">Golgi apparatus</location>
        <location evidence="5">trans-Golgi network membrane</location>
        <topology evidence="7">Multi-pass membrane protein</topology>
    </subcellularLocation>
    <subcellularLocation>
        <location evidence="5">Endosome membrane</location>
        <topology evidence="7">Multi-pass membrane protein</topology>
    </subcellularLocation>
</comment>
<comment type="similarity">
    <text evidence="10">Belongs to the cation transport ATPase (P-type) (TC 3.A.3) family. Type IV subfamily.</text>
</comment>
<keyword id="KW-0067">ATP-binding</keyword>
<keyword id="KW-0967">Endosome</keyword>
<keyword id="KW-0333">Golgi apparatus</keyword>
<keyword id="KW-0445">Lipid transport</keyword>
<keyword id="KW-0460">Magnesium</keyword>
<keyword id="KW-0472">Membrane</keyword>
<keyword id="KW-0479">Metal-binding</keyword>
<keyword id="KW-0547">Nucleotide-binding</keyword>
<keyword id="KW-0597">Phosphoprotein</keyword>
<keyword id="KW-1185">Reference proteome</keyword>
<keyword id="KW-1278">Translocase</keyword>
<keyword id="KW-0812">Transmembrane</keyword>
<keyword id="KW-1133">Transmembrane helix</keyword>
<keyword id="KW-0813">Transport</keyword>
<name>ATC8_SCHPO</name>
<evidence type="ECO:0000250" key="1">
    <source>
        <dbReference type="UniProtKB" id="C7EXK4"/>
    </source>
</evidence>
<evidence type="ECO:0000250" key="2">
    <source>
        <dbReference type="UniProtKB" id="P04191"/>
    </source>
</evidence>
<evidence type="ECO:0000250" key="3">
    <source>
        <dbReference type="UniProtKB" id="P32660"/>
    </source>
</evidence>
<evidence type="ECO:0000250" key="4">
    <source>
        <dbReference type="UniProtKB" id="P39524"/>
    </source>
</evidence>
<evidence type="ECO:0000250" key="5">
    <source>
        <dbReference type="UniProtKB" id="Q12674"/>
    </source>
</evidence>
<evidence type="ECO:0000250" key="6">
    <source>
        <dbReference type="UniProtKB" id="Q9Y2Q0"/>
    </source>
</evidence>
<evidence type="ECO:0000255" key="7"/>
<evidence type="ECO:0000256" key="8">
    <source>
        <dbReference type="SAM" id="MobiDB-lite"/>
    </source>
</evidence>
<evidence type="ECO:0000269" key="9">
    <source>
    </source>
</evidence>
<evidence type="ECO:0000305" key="10"/>
<evidence type="ECO:0000312" key="11">
    <source>
        <dbReference type="PomBase" id="SPAC821.13c"/>
    </source>
</evidence>
<organism>
    <name type="scientific">Schizosaccharomyces pombe (strain 972 / ATCC 24843)</name>
    <name type="common">Fission yeast</name>
    <dbReference type="NCBI Taxonomy" id="284812"/>
    <lineage>
        <taxon>Eukaryota</taxon>
        <taxon>Fungi</taxon>
        <taxon>Dikarya</taxon>
        <taxon>Ascomycota</taxon>
        <taxon>Taphrinomycotina</taxon>
        <taxon>Schizosaccharomycetes</taxon>
        <taxon>Schizosaccharomycetales</taxon>
        <taxon>Schizosaccharomycetaceae</taxon>
        <taxon>Schizosaccharomyces</taxon>
    </lineage>
</organism>
<dbReference type="EC" id="7.6.2.1" evidence="5"/>
<dbReference type="EMBL" id="CU329670">
    <property type="protein sequence ID" value="CAB57447.2"/>
    <property type="molecule type" value="Genomic_DNA"/>
</dbReference>
<dbReference type="PIR" id="T41724">
    <property type="entry name" value="T41724"/>
</dbReference>
<dbReference type="RefSeq" id="XP_001713045.1">
    <property type="nucleotide sequence ID" value="XM_001712993.2"/>
</dbReference>
<dbReference type="SMR" id="Q9UT43"/>
<dbReference type="BioGRID" id="280591">
    <property type="interactions" value="1"/>
</dbReference>
<dbReference type="FunCoup" id="Q9UT43">
    <property type="interactions" value="48"/>
</dbReference>
<dbReference type="STRING" id="284812.Q9UT43"/>
<dbReference type="iPTMnet" id="Q9UT43"/>
<dbReference type="PaxDb" id="4896-SPAC821.13c.1"/>
<dbReference type="EnsemblFungi" id="SPAC821.13c.1">
    <property type="protein sequence ID" value="SPAC821.13c.1:pep"/>
    <property type="gene ID" value="SPAC821.13c"/>
</dbReference>
<dbReference type="PomBase" id="SPAC821.13c">
    <property type="gene designation" value="dnf1"/>
</dbReference>
<dbReference type="VEuPathDB" id="FungiDB:SPAC821.13c"/>
<dbReference type="eggNOG" id="KOG0206">
    <property type="taxonomic scope" value="Eukaryota"/>
</dbReference>
<dbReference type="HOGENOM" id="CLU_000846_5_2_1"/>
<dbReference type="InParanoid" id="Q9UT43"/>
<dbReference type="OMA" id="GWFLWNI"/>
<dbReference type="PhylomeDB" id="Q9UT43"/>
<dbReference type="Reactome" id="R-SPO-6798695">
    <property type="pathway name" value="Neutrophil degranulation"/>
</dbReference>
<dbReference type="Reactome" id="R-SPO-936837">
    <property type="pathway name" value="Ion transport by P-type ATPases"/>
</dbReference>
<dbReference type="PRO" id="PR:Q9UT43"/>
<dbReference type="Proteomes" id="UP000002485">
    <property type="component" value="Chromosome I"/>
</dbReference>
<dbReference type="GO" id="GO:0000935">
    <property type="term" value="C:division septum"/>
    <property type="evidence" value="ECO:0000269"/>
    <property type="project" value="PomBase"/>
</dbReference>
<dbReference type="GO" id="GO:0010008">
    <property type="term" value="C:endosome membrane"/>
    <property type="evidence" value="ECO:0007669"/>
    <property type="project" value="UniProtKB-SubCell"/>
</dbReference>
<dbReference type="GO" id="GO:0000139">
    <property type="term" value="C:Golgi membrane"/>
    <property type="evidence" value="ECO:0000305"/>
    <property type="project" value="PomBase"/>
</dbReference>
<dbReference type="GO" id="GO:0005886">
    <property type="term" value="C:plasma membrane"/>
    <property type="evidence" value="ECO:0000318"/>
    <property type="project" value="GO_Central"/>
</dbReference>
<dbReference type="GO" id="GO:0005802">
    <property type="term" value="C:trans-Golgi network"/>
    <property type="evidence" value="ECO:0000318"/>
    <property type="project" value="GO_Central"/>
</dbReference>
<dbReference type="GO" id="GO:0030140">
    <property type="term" value="C:trans-Golgi network transport vesicle"/>
    <property type="evidence" value="ECO:0000266"/>
    <property type="project" value="PomBase"/>
</dbReference>
<dbReference type="GO" id="GO:0005524">
    <property type="term" value="F:ATP binding"/>
    <property type="evidence" value="ECO:0007669"/>
    <property type="project" value="UniProtKB-KW"/>
</dbReference>
<dbReference type="GO" id="GO:0016887">
    <property type="term" value="F:ATP hydrolysis activity"/>
    <property type="evidence" value="ECO:0007669"/>
    <property type="project" value="InterPro"/>
</dbReference>
<dbReference type="GO" id="GO:0140326">
    <property type="term" value="F:ATPase-coupled intramembrane lipid transporter activity"/>
    <property type="evidence" value="ECO:0000318"/>
    <property type="project" value="GO_Central"/>
</dbReference>
<dbReference type="GO" id="GO:0000287">
    <property type="term" value="F:magnesium ion binding"/>
    <property type="evidence" value="ECO:0007669"/>
    <property type="project" value="InterPro"/>
</dbReference>
<dbReference type="GO" id="GO:0090554">
    <property type="term" value="F:phosphatidylcholine floppase activity"/>
    <property type="evidence" value="ECO:0007669"/>
    <property type="project" value="RHEA"/>
</dbReference>
<dbReference type="GO" id="GO:0032456">
    <property type="term" value="P:endocytic recycling"/>
    <property type="evidence" value="ECO:0000318"/>
    <property type="project" value="GO_Central"/>
</dbReference>
<dbReference type="GO" id="GO:0045332">
    <property type="term" value="P:phospholipid translocation"/>
    <property type="evidence" value="ECO:0000318"/>
    <property type="project" value="GO_Central"/>
</dbReference>
<dbReference type="GO" id="GO:0006892">
    <property type="term" value="P:post-Golgi vesicle-mediated transport"/>
    <property type="evidence" value="ECO:0000318"/>
    <property type="project" value="GO_Central"/>
</dbReference>
<dbReference type="CDD" id="cd02073">
    <property type="entry name" value="P-type_ATPase_APLT_Dnf-like"/>
    <property type="match status" value="1"/>
</dbReference>
<dbReference type="FunFam" id="3.40.50.1000:FF:000014">
    <property type="entry name" value="Phospholipid-transporting ATPase"/>
    <property type="match status" value="1"/>
</dbReference>
<dbReference type="Gene3D" id="3.40.1110.10">
    <property type="entry name" value="Calcium-transporting ATPase, cytoplasmic domain N"/>
    <property type="match status" value="2"/>
</dbReference>
<dbReference type="Gene3D" id="2.70.150.10">
    <property type="entry name" value="Calcium-transporting ATPase, cytoplasmic transduction domain A"/>
    <property type="match status" value="1"/>
</dbReference>
<dbReference type="Gene3D" id="3.40.50.1000">
    <property type="entry name" value="HAD superfamily/HAD-like"/>
    <property type="match status" value="1"/>
</dbReference>
<dbReference type="InterPro" id="IPR023299">
    <property type="entry name" value="ATPase_P-typ_cyto_dom_N"/>
</dbReference>
<dbReference type="InterPro" id="IPR018303">
    <property type="entry name" value="ATPase_P-typ_P_site"/>
</dbReference>
<dbReference type="InterPro" id="IPR023298">
    <property type="entry name" value="ATPase_P-typ_TM_dom_sf"/>
</dbReference>
<dbReference type="InterPro" id="IPR008250">
    <property type="entry name" value="ATPase_P-typ_transduc_dom_A_sf"/>
</dbReference>
<dbReference type="InterPro" id="IPR036412">
    <property type="entry name" value="HAD-like_sf"/>
</dbReference>
<dbReference type="InterPro" id="IPR023214">
    <property type="entry name" value="HAD_sf"/>
</dbReference>
<dbReference type="InterPro" id="IPR006539">
    <property type="entry name" value="P-type_ATPase_IV"/>
</dbReference>
<dbReference type="InterPro" id="IPR032631">
    <property type="entry name" value="P-type_ATPase_N"/>
</dbReference>
<dbReference type="InterPro" id="IPR001757">
    <property type="entry name" value="P_typ_ATPase"/>
</dbReference>
<dbReference type="InterPro" id="IPR032630">
    <property type="entry name" value="P_typ_ATPase_c"/>
</dbReference>
<dbReference type="InterPro" id="IPR044492">
    <property type="entry name" value="P_typ_ATPase_HD_dom"/>
</dbReference>
<dbReference type="NCBIfam" id="TIGR01652">
    <property type="entry name" value="ATPase-Plipid"/>
    <property type="match status" value="2"/>
</dbReference>
<dbReference type="NCBIfam" id="TIGR01494">
    <property type="entry name" value="ATPase_P-type"/>
    <property type="match status" value="1"/>
</dbReference>
<dbReference type="PANTHER" id="PTHR24092:SF174">
    <property type="entry name" value="PHOSPHOLIPID-TRANSPORTING ATPASE DNF3-RELATED"/>
    <property type="match status" value="1"/>
</dbReference>
<dbReference type="PANTHER" id="PTHR24092">
    <property type="entry name" value="PROBABLE PHOSPHOLIPID-TRANSPORTING ATPASE"/>
    <property type="match status" value="1"/>
</dbReference>
<dbReference type="Pfam" id="PF13246">
    <property type="entry name" value="Cation_ATPase"/>
    <property type="match status" value="1"/>
</dbReference>
<dbReference type="Pfam" id="PF00122">
    <property type="entry name" value="E1-E2_ATPase"/>
    <property type="match status" value="1"/>
</dbReference>
<dbReference type="Pfam" id="PF16212">
    <property type="entry name" value="PhoLip_ATPase_C"/>
    <property type="match status" value="1"/>
</dbReference>
<dbReference type="Pfam" id="PF16209">
    <property type="entry name" value="PhoLip_ATPase_N"/>
    <property type="match status" value="1"/>
</dbReference>
<dbReference type="PRINTS" id="PR00119">
    <property type="entry name" value="CATATPASE"/>
</dbReference>
<dbReference type="SFLD" id="SFLDS00003">
    <property type="entry name" value="Haloacid_Dehalogenase"/>
    <property type="match status" value="1"/>
</dbReference>
<dbReference type="SFLD" id="SFLDF00027">
    <property type="entry name" value="p-type_atpase"/>
    <property type="match status" value="1"/>
</dbReference>
<dbReference type="SUPFAM" id="SSF81653">
    <property type="entry name" value="Calcium ATPase, transduction domain A"/>
    <property type="match status" value="1"/>
</dbReference>
<dbReference type="SUPFAM" id="SSF81665">
    <property type="entry name" value="Calcium ATPase, transmembrane domain M"/>
    <property type="match status" value="1"/>
</dbReference>
<dbReference type="SUPFAM" id="SSF56784">
    <property type="entry name" value="HAD-like"/>
    <property type="match status" value="1"/>
</dbReference>
<dbReference type="SUPFAM" id="SSF81660">
    <property type="entry name" value="Metal cation-transporting ATPase, ATP-binding domain N"/>
    <property type="match status" value="1"/>
</dbReference>
<dbReference type="PROSITE" id="PS00154">
    <property type="entry name" value="ATPASE_E1_E2"/>
    <property type="match status" value="1"/>
</dbReference>